<protein>
    <recommendedName>
        <fullName evidence="1">Fluoride-specific ion channel FluC</fullName>
    </recommendedName>
</protein>
<reference key="1">
    <citation type="journal article" date="2010" name="PLoS ONE">
        <title>The complete multipartite genome sequence of Cupriavidus necator JMP134, a versatile pollutant degrader.</title>
        <authorList>
            <person name="Lykidis A."/>
            <person name="Perez-Pantoja D."/>
            <person name="Ledger T."/>
            <person name="Mavromatis K."/>
            <person name="Anderson I.J."/>
            <person name="Ivanova N.N."/>
            <person name="Hooper S.D."/>
            <person name="Lapidus A."/>
            <person name="Lucas S."/>
            <person name="Gonzalez B."/>
            <person name="Kyrpides N.C."/>
        </authorList>
    </citation>
    <scope>NUCLEOTIDE SEQUENCE [LARGE SCALE GENOMIC DNA]</scope>
    <source>
        <strain>JMP134 / LMG 1197</strain>
    </source>
</reference>
<proteinExistence type="inferred from homology"/>
<name>FLUC_CUPPJ</name>
<keyword id="KW-0997">Cell inner membrane</keyword>
<keyword id="KW-1003">Cell membrane</keyword>
<keyword id="KW-0407">Ion channel</keyword>
<keyword id="KW-0406">Ion transport</keyword>
<keyword id="KW-0472">Membrane</keyword>
<keyword id="KW-0479">Metal-binding</keyword>
<keyword id="KW-0915">Sodium</keyword>
<keyword id="KW-0812">Transmembrane</keyword>
<keyword id="KW-1133">Transmembrane helix</keyword>
<keyword id="KW-0813">Transport</keyword>
<sequence>MGPLGFVAVGIGAAVGAWLRWGLSVMWNALNPALPYGTLAANLLGGYLIGLAVGFFDTHPGLPPEWRLLAITGFLGGLTTFSTFSSEALANLISGDYGWALLHLLSHLGGSLLFAALGLWTYRLLA</sequence>
<evidence type="ECO:0000255" key="1">
    <source>
        <dbReference type="HAMAP-Rule" id="MF_00454"/>
    </source>
</evidence>
<gene>
    <name evidence="1" type="primary">fluC</name>
    <name evidence="1" type="synonym">crcB</name>
    <name type="ordered locus">Reut_A1988</name>
</gene>
<accession>Q46ZT1</accession>
<feature type="chain" id="PRO_0000252920" description="Fluoride-specific ion channel FluC">
    <location>
        <begin position="1"/>
        <end position="126"/>
    </location>
</feature>
<feature type="transmembrane region" description="Helical" evidence="1">
    <location>
        <begin position="3"/>
        <end position="23"/>
    </location>
</feature>
<feature type="transmembrane region" description="Helical" evidence="1">
    <location>
        <begin position="36"/>
        <end position="56"/>
    </location>
</feature>
<feature type="transmembrane region" description="Helical" evidence="1">
    <location>
        <begin position="68"/>
        <end position="88"/>
    </location>
</feature>
<feature type="transmembrane region" description="Helical" evidence="1">
    <location>
        <begin position="99"/>
        <end position="119"/>
    </location>
</feature>
<feature type="binding site" evidence="1">
    <location>
        <position position="76"/>
    </location>
    <ligand>
        <name>Na(+)</name>
        <dbReference type="ChEBI" id="CHEBI:29101"/>
        <note>structural</note>
    </ligand>
</feature>
<feature type="binding site" evidence="1">
    <location>
        <position position="79"/>
    </location>
    <ligand>
        <name>Na(+)</name>
        <dbReference type="ChEBI" id="CHEBI:29101"/>
        <note>structural</note>
    </ligand>
</feature>
<comment type="function">
    <text evidence="1">Fluoride-specific ion channel. Important for reducing fluoride concentration in the cell, thus reducing its toxicity.</text>
</comment>
<comment type="catalytic activity">
    <reaction evidence="1">
        <text>fluoride(in) = fluoride(out)</text>
        <dbReference type="Rhea" id="RHEA:76159"/>
        <dbReference type="ChEBI" id="CHEBI:17051"/>
    </reaction>
    <physiologicalReaction direction="left-to-right" evidence="1">
        <dbReference type="Rhea" id="RHEA:76160"/>
    </physiologicalReaction>
</comment>
<comment type="activity regulation">
    <text evidence="1">Na(+) is not transported, but it plays an essential structural role and its presence is essential for fluoride channel function.</text>
</comment>
<comment type="subcellular location">
    <subcellularLocation>
        <location evidence="1">Cell inner membrane</location>
        <topology evidence="1">Multi-pass membrane protein</topology>
    </subcellularLocation>
</comment>
<comment type="similarity">
    <text evidence="1">Belongs to the fluoride channel Fluc/FEX (TC 1.A.43) family.</text>
</comment>
<dbReference type="EMBL" id="CP000090">
    <property type="protein sequence ID" value="AAZ61352.1"/>
    <property type="molecule type" value="Genomic_DNA"/>
</dbReference>
<dbReference type="SMR" id="Q46ZT1"/>
<dbReference type="STRING" id="264198.Reut_A1988"/>
<dbReference type="KEGG" id="reu:Reut_A1988"/>
<dbReference type="eggNOG" id="COG0239">
    <property type="taxonomic scope" value="Bacteria"/>
</dbReference>
<dbReference type="HOGENOM" id="CLU_114342_3_3_4"/>
<dbReference type="OrthoDB" id="9806299at2"/>
<dbReference type="GO" id="GO:0005886">
    <property type="term" value="C:plasma membrane"/>
    <property type="evidence" value="ECO:0007669"/>
    <property type="project" value="UniProtKB-SubCell"/>
</dbReference>
<dbReference type="GO" id="GO:0062054">
    <property type="term" value="F:fluoride channel activity"/>
    <property type="evidence" value="ECO:0007669"/>
    <property type="project" value="UniProtKB-UniRule"/>
</dbReference>
<dbReference type="GO" id="GO:0046872">
    <property type="term" value="F:metal ion binding"/>
    <property type="evidence" value="ECO:0007669"/>
    <property type="project" value="UniProtKB-KW"/>
</dbReference>
<dbReference type="GO" id="GO:0140114">
    <property type="term" value="P:cellular detoxification of fluoride"/>
    <property type="evidence" value="ECO:0007669"/>
    <property type="project" value="UniProtKB-UniRule"/>
</dbReference>
<dbReference type="HAMAP" id="MF_00454">
    <property type="entry name" value="FluC"/>
    <property type="match status" value="1"/>
</dbReference>
<dbReference type="InterPro" id="IPR003691">
    <property type="entry name" value="FluC"/>
</dbReference>
<dbReference type="NCBIfam" id="TIGR00494">
    <property type="entry name" value="crcB"/>
    <property type="match status" value="1"/>
</dbReference>
<dbReference type="NCBIfam" id="NF010792">
    <property type="entry name" value="PRK14196.1"/>
    <property type="match status" value="1"/>
</dbReference>
<dbReference type="PANTHER" id="PTHR28259">
    <property type="entry name" value="FLUORIDE EXPORT PROTEIN 1-RELATED"/>
    <property type="match status" value="1"/>
</dbReference>
<dbReference type="PANTHER" id="PTHR28259:SF1">
    <property type="entry name" value="FLUORIDE EXPORT PROTEIN 1-RELATED"/>
    <property type="match status" value="1"/>
</dbReference>
<dbReference type="Pfam" id="PF02537">
    <property type="entry name" value="CRCB"/>
    <property type="match status" value="1"/>
</dbReference>
<organism>
    <name type="scientific">Cupriavidus pinatubonensis (strain JMP 134 / LMG 1197)</name>
    <name type="common">Cupriavidus necator (strain JMP 134)</name>
    <dbReference type="NCBI Taxonomy" id="264198"/>
    <lineage>
        <taxon>Bacteria</taxon>
        <taxon>Pseudomonadati</taxon>
        <taxon>Pseudomonadota</taxon>
        <taxon>Betaproteobacteria</taxon>
        <taxon>Burkholderiales</taxon>
        <taxon>Burkholderiaceae</taxon>
        <taxon>Cupriavidus</taxon>
    </lineage>
</organism>